<gene>
    <name evidence="1" type="primary">nrdR</name>
    <name type="ordered locus">Ppro_1597</name>
</gene>
<evidence type="ECO:0000255" key="1">
    <source>
        <dbReference type="HAMAP-Rule" id="MF_00440"/>
    </source>
</evidence>
<evidence type="ECO:0000256" key="2">
    <source>
        <dbReference type="SAM" id="MobiDB-lite"/>
    </source>
</evidence>
<sequence length="150" mass="17650">MKCPFCGNSDSKVVDSRPDKGGSGIRRRRECEQCAKRFTTHERIEEMLPLVLKKDGRREPFERTKIISGIKKACEKRPISVEVIERLVDRLETRLQESSEKEISTTLIGEWIMKELHDLDEVAYVRFASVYRSFRDINEFMQELQELLKK</sequence>
<name>NRDR_PELPD</name>
<keyword id="KW-0067">ATP-binding</keyword>
<keyword id="KW-0238">DNA-binding</keyword>
<keyword id="KW-0479">Metal-binding</keyword>
<keyword id="KW-0547">Nucleotide-binding</keyword>
<keyword id="KW-1185">Reference proteome</keyword>
<keyword id="KW-0678">Repressor</keyword>
<keyword id="KW-0804">Transcription</keyword>
<keyword id="KW-0805">Transcription regulation</keyword>
<keyword id="KW-0862">Zinc</keyword>
<keyword id="KW-0863">Zinc-finger</keyword>
<feature type="chain" id="PRO_1000080790" description="Transcriptional repressor NrdR">
    <location>
        <begin position="1"/>
        <end position="150"/>
    </location>
</feature>
<feature type="domain" description="ATP-cone" evidence="1">
    <location>
        <begin position="49"/>
        <end position="139"/>
    </location>
</feature>
<feature type="zinc finger region" evidence="1">
    <location>
        <begin position="3"/>
        <end position="34"/>
    </location>
</feature>
<feature type="region of interest" description="Disordered" evidence="2">
    <location>
        <begin position="1"/>
        <end position="26"/>
    </location>
</feature>
<proteinExistence type="inferred from homology"/>
<protein>
    <recommendedName>
        <fullName evidence="1">Transcriptional repressor NrdR</fullName>
    </recommendedName>
</protein>
<dbReference type="EMBL" id="CP000482">
    <property type="protein sequence ID" value="ABK99212.1"/>
    <property type="molecule type" value="Genomic_DNA"/>
</dbReference>
<dbReference type="RefSeq" id="WP_011735502.1">
    <property type="nucleotide sequence ID" value="NC_008609.1"/>
</dbReference>
<dbReference type="SMR" id="A1APE2"/>
<dbReference type="STRING" id="338966.Ppro_1597"/>
<dbReference type="KEGG" id="ppd:Ppro_1597"/>
<dbReference type="eggNOG" id="COG1327">
    <property type="taxonomic scope" value="Bacteria"/>
</dbReference>
<dbReference type="HOGENOM" id="CLU_108412_0_0_7"/>
<dbReference type="OrthoDB" id="9807461at2"/>
<dbReference type="Proteomes" id="UP000006732">
    <property type="component" value="Chromosome"/>
</dbReference>
<dbReference type="GO" id="GO:0005524">
    <property type="term" value="F:ATP binding"/>
    <property type="evidence" value="ECO:0007669"/>
    <property type="project" value="UniProtKB-KW"/>
</dbReference>
<dbReference type="GO" id="GO:0003677">
    <property type="term" value="F:DNA binding"/>
    <property type="evidence" value="ECO:0007669"/>
    <property type="project" value="UniProtKB-KW"/>
</dbReference>
<dbReference type="GO" id="GO:0008270">
    <property type="term" value="F:zinc ion binding"/>
    <property type="evidence" value="ECO:0007669"/>
    <property type="project" value="UniProtKB-UniRule"/>
</dbReference>
<dbReference type="GO" id="GO:0045892">
    <property type="term" value="P:negative regulation of DNA-templated transcription"/>
    <property type="evidence" value="ECO:0007669"/>
    <property type="project" value="UniProtKB-UniRule"/>
</dbReference>
<dbReference type="HAMAP" id="MF_00440">
    <property type="entry name" value="NrdR"/>
    <property type="match status" value="1"/>
</dbReference>
<dbReference type="InterPro" id="IPR005144">
    <property type="entry name" value="ATP-cone_dom"/>
</dbReference>
<dbReference type="InterPro" id="IPR055173">
    <property type="entry name" value="NrdR-like_N"/>
</dbReference>
<dbReference type="InterPro" id="IPR003796">
    <property type="entry name" value="RNR_NrdR-like"/>
</dbReference>
<dbReference type="NCBIfam" id="TIGR00244">
    <property type="entry name" value="transcriptional regulator NrdR"/>
    <property type="match status" value="1"/>
</dbReference>
<dbReference type="PANTHER" id="PTHR30455">
    <property type="entry name" value="TRANSCRIPTIONAL REPRESSOR NRDR"/>
    <property type="match status" value="1"/>
</dbReference>
<dbReference type="PANTHER" id="PTHR30455:SF2">
    <property type="entry name" value="TRANSCRIPTIONAL REPRESSOR NRDR"/>
    <property type="match status" value="1"/>
</dbReference>
<dbReference type="Pfam" id="PF03477">
    <property type="entry name" value="ATP-cone"/>
    <property type="match status" value="1"/>
</dbReference>
<dbReference type="Pfam" id="PF22811">
    <property type="entry name" value="Zn_ribbon_NrdR"/>
    <property type="match status" value="1"/>
</dbReference>
<dbReference type="PROSITE" id="PS51161">
    <property type="entry name" value="ATP_CONE"/>
    <property type="match status" value="1"/>
</dbReference>
<reference key="1">
    <citation type="submission" date="2006-10" db="EMBL/GenBank/DDBJ databases">
        <title>Complete sequence of chromosome of Pelobacter propionicus DSM 2379.</title>
        <authorList>
            <consortium name="US DOE Joint Genome Institute"/>
            <person name="Copeland A."/>
            <person name="Lucas S."/>
            <person name="Lapidus A."/>
            <person name="Barry K."/>
            <person name="Detter J.C."/>
            <person name="Glavina del Rio T."/>
            <person name="Hammon N."/>
            <person name="Israni S."/>
            <person name="Dalin E."/>
            <person name="Tice H."/>
            <person name="Pitluck S."/>
            <person name="Saunders E."/>
            <person name="Brettin T."/>
            <person name="Bruce D."/>
            <person name="Han C."/>
            <person name="Tapia R."/>
            <person name="Schmutz J."/>
            <person name="Larimer F."/>
            <person name="Land M."/>
            <person name="Hauser L."/>
            <person name="Kyrpides N."/>
            <person name="Kim E."/>
            <person name="Lovley D."/>
            <person name="Richardson P."/>
        </authorList>
    </citation>
    <scope>NUCLEOTIDE SEQUENCE [LARGE SCALE GENOMIC DNA]</scope>
    <source>
        <strain>DSM 2379 / NBRC 103807 / OttBd1</strain>
    </source>
</reference>
<organism>
    <name type="scientific">Pelobacter propionicus (strain DSM 2379 / NBRC 103807 / OttBd1)</name>
    <dbReference type="NCBI Taxonomy" id="338966"/>
    <lineage>
        <taxon>Bacteria</taxon>
        <taxon>Pseudomonadati</taxon>
        <taxon>Thermodesulfobacteriota</taxon>
        <taxon>Desulfuromonadia</taxon>
        <taxon>Desulfuromonadales</taxon>
        <taxon>Desulfuromonadaceae</taxon>
        <taxon>Pelobacter</taxon>
    </lineage>
</organism>
<comment type="function">
    <text evidence="1">Negatively regulates transcription of bacterial ribonucleotide reductase nrd genes and operons by binding to NrdR-boxes.</text>
</comment>
<comment type="cofactor">
    <cofactor evidence="1">
        <name>Zn(2+)</name>
        <dbReference type="ChEBI" id="CHEBI:29105"/>
    </cofactor>
    <text evidence="1">Binds 1 zinc ion.</text>
</comment>
<comment type="similarity">
    <text evidence="1">Belongs to the NrdR family.</text>
</comment>
<accession>A1APE2</accession>